<dbReference type="EC" id="6.3.5.5" evidence="1"/>
<dbReference type="EMBL" id="AP006840">
    <property type="protein sequence ID" value="BAD40188.1"/>
    <property type="molecule type" value="Genomic_DNA"/>
</dbReference>
<dbReference type="SMR" id="Q67Q55"/>
<dbReference type="STRING" id="292459.STH1203"/>
<dbReference type="MEROPS" id="C26.A33"/>
<dbReference type="KEGG" id="sth:STH1203"/>
<dbReference type="eggNOG" id="COG0505">
    <property type="taxonomic scope" value="Bacteria"/>
</dbReference>
<dbReference type="HOGENOM" id="CLU_035901_2_1_9"/>
<dbReference type="UniPathway" id="UPA00068">
    <property type="reaction ID" value="UER00171"/>
</dbReference>
<dbReference type="UniPathway" id="UPA00070">
    <property type="reaction ID" value="UER00115"/>
</dbReference>
<dbReference type="Proteomes" id="UP000000417">
    <property type="component" value="Chromosome"/>
</dbReference>
<dbReference type="GO" id="GO:0005524">
    <property type="term" value="F:ATP binding"/>
    <property type="evidence" value="ECO:0007669"/>
    <property type="project" value="UniProtKB-UniRule"/>
</dbReference>
<dbReference type="GO" id="GO:0004088">
    <property type="term" value="F:carbamoyl-phosphate synthase (glutamine-hydrolyzing) activity"/>
    <property type="evidence" value="ECO:0007669"/>
    <property type="project" value="UniProtKB-UniRule"/>
</dbReference>
<dbReference type="GO" id="GO:0004359">
    <property type="term" value="F:glutaminase activity"/>
    <property type="evidence" value="ECO:0007669"/>
    <property type="project" value="RHEA"/>
</dbReference>
<dbReference type="GO" id="GO:0006207">
    <property type="term" value="P:'de novo' pyrimidine nucleobase biosynthetic process"/>
    <property type="evidence" value="ECO:0007669"/>
    <property type="project" value="InterPro"/>
</dbReference>
<dbReference type="GO" id="GO:0044205">
    <property type="term" value="P:'de novo' UMP biosynthetic process"/>
    <property type="evidence" value="ECO:0007669"/>
    <property type="project" value="UniProtKB-UniRule"/>
</dbReference>
<dbReference type="GO" id="GO:0006541">
    <property type="term" value="P:glutamine metabolic process"/>
    <property type="evidence" value="ECO:0007669"/>
    <property type="project" value="InterPro"/>
</dbReference>
<dbReference type="GO" id="GO:0006526">
    <property type="term" value="P:L-arginine biosynthetic process"/>
    <property type="evidence" value="ECO:0007669"/>
    <property type="project" value="UniProtKB-UniRule"/>
</dbReference>
<dbReference type="CDD" id="cd01744">
    <property type="entry name" value="GATase1_CPSase"/>
    <property type="match status" value="1"/>
</dbReference>
<dbReference type="FunFam" id="3.50.30.20:FF:000001">
    <property type="entry name" value="Carbamoyl-phosphate synthase small chain"/>
    <property type="match status" value="1"/>
</dbReference>
<dbReference type="Gene3D" id="3.40.50.880">
    <property type="match status" value="1"/>
</dbReference>
<dbReference type="Gene3D" id="3.50.30.20">
    <property type="entry name" value="Carbamoyl-phosphate synthase small subunit, N-terminal domain"/>
    <property type="match status" value="1"/>
</dbReference>
<dbReference type="HAMAP" id="MF_01209">
    <property type="entry name" value="CPSase_S_chain"/>
    <property type="match status" value="1"/>
</dbReference>
<dbReference type="InterPro" id="IPR050472">
    <property type="entry name" value="Anth_synth/Amidotransfase"/>
</dbReference>
<dbReference type="InterPro" id="IPR006274">
    <property type="entry name" value="CarbamoylP_synth_ssu"/>
</dbReference>
<dbReference type="InterPro" id="IPR002474">
    <property type="entry name" value="CarbamoylP_synth_ssu_N"/>
</dbReference>
<dbReference type="InterPro" id="IPR036480">
    <property type="entry name" value="CarbP_synth_ssu_N_sf"/>
</dbReference>
<dbReference type="InterPro" id="IPR029062">
    <property type="entry name" value="Class_I_gatase-like"/>
</dbReference>
<dbReference type="InterPro" id="IPR035686">
    <property type="entry name" value="CPSase_GATase1"/>
</dbReference>
<dbReference type="InterPro" id="IPR017926">
    <property type="entry name" value="GATASE"/>
</dbReference>
<dbReference type="NCBIfam" id="TIGR01368">
    <property type="entry name" value="CPSaseIIsmall"/>
    <property type="match status" value="1"/>
</dbReference>
<dbReference type="NCBIfam" id="NF009475">
    <property type="entry name" value="PRK12838.1"/>
    <property type="match status" value="1"/>
</dbReference>
<dbReference type="PANTHER" id="PTHR43418:SF7">
    <property type="entry name" value="CARBAMOYL-PHOSPHATE SYNTHASE SMALL CHAIN"/>
    <property type="match status" value="1"/>
</dbReference>
<dbReference type="PANTHER" id="PTHR43418">
    <property type="entry name" value="MULTIFUNCTIONAL TRYPTOPHAN BIOSYNTHESIS PROTEIN-RELATED"/>
    <property type="match status" value="1"/>
</dbReference>
<dbReference type="Pfam" id="PF00988">
    <property type="entry name" value="CPSase_sm_chain"/>
    <property type="match status" value="1"/>
</dbReference>
<dbReference type="Pfam" id="PF00117">
    <property type="entry name" value="GATase"/>
    <property type="match status" value="1"/>
</dbReference>
<dbReference type="PRINTS" id="PR00097">
    <property type="entry name" value="ANTSNTHASEII"/>
</dbReference>
<dbReference type="PRINTS" id="PR00099">
    <property type="entry name" value="CPSGATASE"/>
</dbReference>
<dbReference type="PRINTS" id="PR00096">
    <property type="entry name" value="GATASE"/>
</dbReference>
<dbReference type="SMART" id="SM01097">
    <property type="entry name" value="CPSase_sm_chain"/>
    <property type="match status" value="1"/>
</dbReference>
<dbReference type="SUPFAM" id="SSF52021">
    <property type="entry name" value="Carbamoyl phosphate synthetase, small subunit N-terminal domain"/>
    <property type="match status" value="1"/>
</dbReference>
<dbReference type="SUPFAM" id="SSF52317">
    <property type="entry name" value="Class I glutamine amidotransferase-like"/>
    <property type="match status" value="1"/>
</dbReference>
<dbReference type="PROSITE" id="PS51273">
    <property type="entry name" value="GATASE_TYPE_1"/>
    <property type="match status" value="1"/>
</dbReference>
<keyword id="KW-0028">Amino-acid biosynthesis</keyword>
<keyword id="KW-0055">Arginine biosynthesis</keyword>
<keyword id="KW-0067">ATP-binding</keyword>
<keyword id="KW-0315">Glutamine amidotransferase</keyword>
<keyword id="KW-0436">Ligase</keyword>
<keyword id="KW-0547">Nucleotide-binding</keyword>
<keyword id="KW-0665">Pyrimidine biosynthesis</keyword>
<keyword id="KW-1185">Reference proteome</keyword>
<accession>Q67Q55</accession>
<evidence type="ECO:0000255" key="1">
    <source>
        <dbReference type="HAMAP-Rule" id="MF_01209"/>
    </source>
</evidence>
<feature type="chain" id="PRO_0000112336" description="Carbamoyl phosphate synthase small chain">
    <location>
        <begin position="1"/>
        <end position="363"/>
    </location>
</feature>
<feature type="domain" description="Glutamine amidotransferase type-1" evidence="1">
    <location>
        <begin position="171"/>
        <end position="359"/>
    </location>
</feature>
<feature type="region of interest" description="CPSase" evidence="1">
    <location>
        <begin position="1"/>
        <end position="171"/>
    </location>
</feature>
<feature type="active site" description="Nucleophile" evidence="1">
    <location>
        <position position="248"/>
    </location>
</feature>
<feature type="active site" evidence="1">
    <location>
        <position position="332"/>
    </location>
</feature>
<feature type="active site" evidence="1">
    <location>
        <position position="334"/>
    </location>
</feature>
<feature type="binding site" evidence="1">
    <location>
        <position position="39"/>
    </location>
    <ligand>
        <name>L-glutamine</name>
        <dbReference type="ChEBI" id="CHEBI:58359"/>
    </ligand>
</feature>
<feature type="binding site" evidence="1">
    <location>
        <position position="219"/>
    </location>
    <ligand>
        <name>L-glutamine</name>
        <dbReference type="ChEBI" id="CHEBI:58359"/>
    </ligand>
</feature>
<feature type="binding site" evidence="1">
    <location>
        <position position="221"/>
    </location>
    <ligand>
        <name>L-glutamine</name>
        <dbReference type="ChEBI" id="CHEBI:58359"/>
    </ligand>
</feature>
<feature type="binding site" evidence="1">
    <location>
        <position position="249"/>
    </location>
    <ligand>
        <name>L-glutamine</name>
        <dbReference type="ChEBI" id="CHEBI:58359"/>
    </ligand>
</feature>
<feature type="binding site" evidence="1">
    <location>
        <position position="252"/>
    </location>
    <ligand>
        <name>L-glutamine</name>
        <dbReference type="ChEBI" id="CHEBI:58359"/>
    </ligand>
</feature>
<feature type="binding site" evidence="1">
    <location>
        <position position="290"/>
    </location>
    <ligand>
        <name>L-glutamine</name>
        <dbReference type="ChEBI" id="CHEBI:58359"/>
    </ligand>
</feature>
<feature type="binding site" evidence="1">
    <location>
        <position position="292"/>
    </location>
    <ligand>
        <name>L-glutamine</name>
        <dbReference type="ChEBI" id="CHEBI:58359"/>
    </ligand>
</feature>
<feature type="binding site" evidence="1">
    <location>
        <position position="293"/>
    </location>
    <ligand>
        <name>L-glutamine</name>
        <dbReference type="ChEBI" id="CHEBI:58359"/>
    </ligand>
</feature>
<protein>
    <recommendedName>
        <fullName evidence="1">Carbamoyl phosphate synthase small chain</fullName>
        <ecNumber evidence="1">6.3.5.5</ecNumber>
    </recommendedName>
    <alternativeName>
        <fullName evidence="1">Carbamoyl phosphate synthetase glutamine chain</fullName>
    </alternativeName>
</protein>
<comment type="function">
    <text evidence="1">Small subunit of the glutamine-dependent carbamoyl phosphate synthetase (CPSase). CPSase catalyzes the formation of carbamoyl phosphate from the ammonia moiety of glutamine, carbonate, and phosphate donated by ATP, constituting the first step of 2 biosynthetic pathways, one leading to arginine and/or urea and the other to pyrimidine nucleotides. The small subunit (glutamine amidotransferase) binds and cleaves glutamine to supply the large subunit with the substrate ammonia.</text>
</comment>
<comment type="catalytic activity">
    <reaction evidence="1">
        <text>hydrogencarbonate + L-glutamine + 2 ATP + H2O = carbamoyl phosphate + L-glutamate + 2 ADP + phosphate + 2 H(+)</text>
        <dbReference type="Rhea" id="RHEA:18633"/>
        <dbReference type="ChEBI" id="CHEBI:15377"/>
        <dbReference type="ChEBI" id="CHEBI:15378"/>
        <dbReference type="ChEBI" id="CHEBI:17544"/>
        <dbReference type="ChEBI" id="CHEBI:29985"/>
        <dbReference type="ChEBI" id="CHEBI:30616"/>
        <dbReference type="ChEBI" id="CHEBI:43474"/>
        <dbReference type="ChEBI" id="CHEBI:58228"/>
        <dbReference type="ChEBI" id="CHEBI:58359"/>
        <dbReference type="ChEBI" id="CHEBI:456216"/>
        <dbReference type="EC" id="6.3.5.5"/>
    </reaction>
</comment>
<comment type="catalytic activity">
    <molecule>Carbamoyl phosphate synthase small chain</molecule>
    <reaction evidence="1">
        <text>L-glutamine + H2O = L-glutamate + NH4(+)</text>
        <dbReference type="Rhea" id="RHEA:15889"/>
        <dbReference type="ChEBI" id="CHEBI:15377"/>
        <dbReference type="ChEBI" id="CHEBI:28938"/>
        <dbReference type="ChEBI" id="CHEBI:29985"/>
        <dbReference type="ChEBI" id="CHEBI:58359"/>
    </reaction>
</comment>
<comment type="pathway">
    <text evidence="1">Amino-acid biosynthesis; L-arginine biosynthesis; carbamoyl phosphate from bicarbonate: step 1/1.</text>
</comment>
<comment type="pathway">
    <text evidence="1">Pyrimidine metabolism; UMP biosynthesis via de novo pathway; (S)-dihydroorotate from bicarbonate: step 1/3.</text>
</comment>
<comment type="subunit">
    <text evidence="1">Composed of two chains; the small (or glutamine) chain promotes the hydrolysis of glutamine to ammonia, which is used by the large (or ammonia) chain to synthesize carbamoyl phosphate. Tetramer of heterodimers (alpha,beta)4.</text>
</comment>
<comment type="similarity">
    <text evidence="1">Belongs to the CarA family.</text>
</comment>
<gene>
    <name evidence="1" type="primary">carA</name>
    <name type="ordered locus">STH1203</name>
</gene>
<reference key="1">
    <citation type="journal article" date="2004" name="Nucleic Acids Res.">
        <title>Genome sequence of Symbiobacterium thermophilum, an uncultivable bacterium that depends on microbial commensalism.</title>
        <authorList>
            <person name="Ueda K."/>
            <person name="Yamashita A."/>
            <person name="Ishikawa J."/>
            <person name="Shimada M."/>
            <person name="Watsuji T."/>
            <person name="Morimura K."/>
            <person name="Ikeda H."/>
            <person name="Hattori M."/>
            <person name="Beppu T."/>
        </authorList>
    </citation>
    <scope>NUCLEOTIDE SEQUENCE [LARGE SCALE GENOMIC DNA]</scope>
    <source>
        <strain>DSM 24528 / JCM 14929 / IAM 14863 / T</strain>
    </source>
</reference>
<name>CARA_SYMTH</name>
<organism>
    <name type="scientific">Symbiobacterium thermophilum (strain DSM 24528 / JCM 14929 / IAM 14863 / T)</name>
    <dbReference type="NCBI Taxonomy" id="292459"/>
    <lineage>
        <taxon>Bacteria</taxon>
        <taxon>Bacillati</taxon>
        <taxon>Bacillota</taxon>
        <taxon>Clostridia</taxon>
        <taxon>Eubacteriales</taxon>
        <taxon>Symbiobacteriaceae</taxon>
        <taxon>Symbiobacterium</taxon>
    </lineage>
</organism>
<proteinExistence type="inferred from homology"/>
<sequence>MEDGTLFAGAGFGAPAVQAGEVVFNTGMTGYQEVVTDPSYYGQIVVMTYPLIGNYGVTAADGESRQPWIRGLVVKELCDRPSHWQAVGSLSDYLAGCGVPILAGLDTRALTRHLRSHGTMRGVIATLPEGAEPGPAQVAAWVETARAFRLEGAVRSVATAAPYRIPGPGPRVVAVDFGAKENILRELTARGCDVTVVPATASAEEVLSLRPEGVVLTNGPGAPTDVPEAVEMVRGLLSQGDLPIFGICLGHQIAALALGATTYKLPYGHRGANHPVKELATGRIHITSQNHGYAVAAESLPPEVEVTHVSLHDGTVEGLAHRRLPLFTVQYHPEACPGPRENRYLFDRFLALVDRSAVSTRTA</sequence>